<keyword id="KW-1185">Reference proteome</keyword>
<proteinExistence type="inferred from homology"/>
<evidence type="ECO:0000255" key="1">
    <source>
        <dbReference type="HAMAP-Rule" id="MF_00095"/>
    </source>
</evidence>
<comment type="similarity">
    <text evidence="1">Belongs to the SfsA family.</text>
</comment>
<gene>
    <name evidence="1" type="primary">sfsA</name>
    <name type="ordered locus">PM0754</name>
</gene>
<feature type="chain" id="PRO_0000152292" description="Sugar fermentation stimulation protein homolog">
    <location>
        <begin position="1"/>
        <end position="240"/>
    </location>
</feature>
<protein>
    <recommendedName>
        <fullName evidence="1">Sugar fermentation stimulation protein homolog</fullName>
    </recommendedName>
</protein>
<reference key="1">
    <citation type="journal article" date="2001" name="Proc. Natl. Acad. Sci. U.S.A.">
        <title>Complete genomic sequence of Pasteurella multocida Pm70.</title>
        <authorList>
            <person name="May B.J."/>
            <person name="Zhang Q."/>
            <person name="Li L.L."/>
            <person name="Paustian M.L."/>
            <person name="Whittam T.S."/>
            <person name="Kapur V."/>
        </authorList>
    </citation>
    <scope>NUCLEOTIDE SEQUENCE [LARGE SCALE GENOMIC DNA]</scope>
    <source>
        <strain>Pm70</strain>
    </source>
</reference>
<dbReference type="EMBL" id="AE004439">
    <property type="protein sequence ID" value="AAK02838.1"/>
    <property type="molecule type" value="Genomic_DNA"/>
</dbReference>
<dbReference type="RefSeq" id="WP_005751567.1">
    <property type="nucleotide sequence ID" value="NC_002663.1"/>
</dbReference>
<dbReference type="SMR" id="P57871"/>
<dbReference type="EnsemblBacteria" id="AAK02838">
    <property type="protein sequence ID" value="AAK02838"/>
    <property type="gene ID" value="PM0754"/>
</dbReference>
<dbReference type="GeneID" id="77207819"/>
<dbReference type="KEGG" id="pmu:PM0754"/>
<dbReference type="PATRIC" id="fig|272843.6.peg.762"/>
<dbReference type="HOGENOM" id="CLU_052299_2_0_6"/>
<dbReference type="OrthoDB" id="9802365at2"/>
<dbReference type="Proteomes" id="UP000000809">
    <property type="component" value="Chromosome"/>
</dbReference>
<dbReference type="GO" id="GO:0003677">
    <property type="term" value="F:DNA binding"/>
    <property type="evidence" value="ECO:0007669"/>
    <property type="project" value="InterPro"/>
</dbReference>
<dbReference type="CDD" id="cd22359">
    <property type="entry name" value="SfsA-like_bacterial"/>
    <property type="match status" value="1"/>
</dbReference>
<dbReference type="FunFam" id="2.40.50.580:FF:000001">
    <property type="entry name" value="Sugar fermentation stimulation protein A"/>
    <property type="match status" value="1"/>
</dbReference>
<dbReference type="FunFam" id="3.40.1350.60:FF:000001">
    <property type="entry name" value="Sugar fermentation stimulation protein A"/>
    <property type="match status" value="1"/>
</dbReference>
<dbReference type="Gene3D" id="2.40.50.580">
    <property type="match status" value="1"/>
</dbReference>
<dbReference type="Gene3D" id="3.40.1350.60">
    <property type="match status" value="1"/>
</dbReference>
<dbReference type="HAMAP" id="MF_00095">
    <property type="entry name" value="SfsA"/>
    <property type="match status" value="1"/>
</dbReference>
<dbReference type="InterPro" id="IPR007110">
    <property type="entry name" value="Ig-like_dom"/>
</dbReference>
<dbReference type="InterPro" id="IPR005224">
    <property type="entry name" value="SfsA"/>
</dbReference>
<dbReference type="InterPro" id="IPR040452">
    <property type="entry name" value="SfsA_C"/>
</dbReference>
<dbReference type="InterPro" id="IPR041465">
    <property type="entry name" value="SfsA_N"/>
</dbReference>
<dbReference type="NCBIfam" id="TIGR00230">
    <property type="entry name" value="sfsA"/>
    <property type="match status" value="1"/>
</dbReference>
<dbReference type="PANTHER" id="PTHR30545">
    <property type="entry name" value="SUGAR FERMENTATION STIMULATION PROTEIN A"/>
    <property type="match status" value="1"/>
</dbReference>
<dbReference type="PANTHER" id="PTHR30545:SF2">
    <property type="entry name" value="SUGAR FERMENTATION STIMULATION PROTEIN A"/>
    <property type="match status" value="1"/>
</dbReference>
<dbReference type="Pfam" id="PF03749">
    <property type="entry name" value="SfsA"/>
    <property type="match status" value="1"/>
</dbReference>
<dbReference type="Pfam" id="PF17746">
    <property type="entry name" value="SfsA_N"/>
    <property type="match status" value="1"/>
</dbReference>
<accession>P57871</accession>
<name>SFSA_PASMU</name>
<organism>
    <name type="scientific">Pasteurella multocida (strain Pm70)</name>
    <dbReference type="NCBI Taxonomy" id="272843"/>
    <lineage>
        <taxon>Bacteria</taxon>
        <taxon>Pseudomonadati</taxon>
        <taxon>Pseudomonadota</taxon>
        <taxon>Gammaproteobacteria</taxon>
        <taxon>Pasteurellales</taxon>
        <taxon>Pasteurellaceae</taxon>
        <taxon>Pasteurella</taxon>
    </lineage>
</organism>
<sequence>MQLPPLQSATLIRRYKRFLADVQLDNGEVLTIHCANTGAMTGCGEAGDIVWYSHSDSQTRKYPHSWELTELKNGNMVCINTHRSNQLTLEALQNKQIKALAMYEQILPEVKYGEENSRIDFLLKGDGLPDCYVEVKSVTLVKNTIGMFPDAVTTRGQKHLRELIAMKKRGHRAVVFFAGLHNGFDCFKVAEYIDPEYDKLLQEAIQEGVEVYAYAGKFDFSDKKPTALSLTHCVPYIGKK</sequence>